<gene>
    <name type="ordered locus">CV_1250</name>
</gene>
<protein>
    <recommendedName>
        <fullName evidence="1">UPF0246 protein CV_1250</fullName>
    </recommendedName>
</protein>
<comment type="similarity">
    <text evidence="1">Belongs to the UPF0246 family.</text>
</comment>
<feature type="chain" id="PRO_0000203979" description="UPF0246 protein CV_1250">
    <location>
        <begin position="1"/>
        <end position="257"/>
    </location>
</feature>
<evidence type="ECO:0000255" key="1">
    <source>
        <dbReference type="HAMAP-Rule" id="MF_00652"/>
    </source>
</evidence>
<organism>
    <name type="scientific">Chromobacterium violaceum (strain ATCC 12472 / DSM 30191 / JCM 1249 / CCUG 213 / NBRC 12614 / NCIMB 9131 / NCTC 9757 / MK)</name>
    <dbReference type="NCBI Taxonomy" id="243365"/>
    <lineage>
        <taxon>Bacteria</taxon>
        <taxon>Pseudomonadati</taxon>
        <taxon>Pseudomonadota</taxon>
        <taxon>Betaproteobacteria</taxon>
        <taxon>Neisseriales</taxon>
        <taxon>Chromobacteriaceae</taxon>
        <taxon>Chromobacterium</taxon>
    </lineage>
</organism>
<sequence length="257" mass="29057">MLMVISPAKTLDYQTPPAVDQYSQPDLLDHSAELIDVLRQKSPLDIAKLMDISDALANLNVGRYADWQRPFTQNNAKQAVYAFMGDVYEGLDASTLGRPAIGYLQERLRILSGLYGVLRPLDLMQAYRLEMGTRLANGRGKNLYEFWGETVTAKLNEQLEALGQRTLVNLASDEYFKSVKRKALNAAIVTPVFQDRKNGQYKIISFYAKRARGLMARWAAERGVADPDQLRGFDSEGYAFDASASDELTWVFRRDRE</sequence>
<reference key="1">
    <citation type="journal article" date="2003" name="Proc. Natl. Acad. Sci. U.S.A.">
        <title>The complete genome sequence of Chromobacterium violaceum reveals remarkable and exploitable bacterial adaptability.</title>
        <authorList>
            <person name="Vasconcelos A.T.R."/>
            <person name="de Almeida D.F."/>
            <person name="Hungria M."/>
            <person name="Guimaraes C.T."/>
            <person name="Antonio R.V."/>
            <person name="Almeida F.C."/>
            <person name="de Almeida L.G.P."/>
            <person name="de Almeida R."/>
            <person name="Alves-Gomes J.A."/>
            <person name="Andrade E.M."/>
            <person name="Araripe J."/>
            <person name="de Araujo M.F.F."/>
            <person name="Astolfi-Filho S."/>
            <person name="Azevedo V."/>
            <person name="Baptista A.J."/>
            <person name="Bataus L.A.M."/>
            <person name="Batista J.S."/>
            <person name="Belo A."/>
            <person name="van den Berg C."/>
            <person name="Bogo M."/>
            <person name="Bonatto S."/>
            <person name="Bordignon J."/>
            <person name="Brigido M.M."/>
            <person name="Brito C.A."/>
            <person name="Brocchi M."/>
            <person name="Burity H.A."/>
            <person name="Camargo A.A."/>
            <person name="Cardoso D.D.P."/>
            <person name="Carneiro N.P."/>
            <person name="Carraro D.M."/>
            <person name="Carvalho C.M.B."/>
            <person name="Cascardo J.C.M."/>
            <person name="Cavada B.S."/>
            <person name="Chueire L.M.O."/>
            <person name="Creczynski-Pasa T.B."/>
            <person name="Cunha-Junior N.C."/>
            <person name="Fagundes N."/>
            <person name="Falcao C.L."/>
            <person name="Fantinatti F."/>
            <person name="Farias I.P."/>
            <person name="Felipe M.S.S."/>
            <person name="Ferrari L.P."/>
            <person name="Ferro J.A."/>
            <person name="Ferro M.I.T."/>
            <person name="Franco G.R."/>
            <person name="Freitas N.S.A."/>
            <person name="Furlan L.R."/>
            <person name="Gazzinelli R.T."/>
            <person name="Gomes E.A."/>
            <person name="Goncalves P.R."/>
            <person name="Grangeiro T.B."/>
            <person name="Grattapaglia D."/>
            <person name="Grisard E.C."/>
            <person name="Hanna E.S."/>
            <person name="Jardim S.N."/>
            <person name="Laurino J."/>
            <person name="Leoi L.C.T."/>
            <person name="Lima L.F.A."/>
            <person name="Loureiro M.F."/>
            <person name="Lyra M.C.C.P."/>
            <person name="Madeira H.M.F."/>
            <person name="Manfio G.P."/>
            <person name="Maranhao A.Q."/>
            <person name="Martins W.S."/>
            <person name="di Mauro S.M.Z."/>
            <person name="de Medeiros S.R.B."/>
            <person name="Meissner R.V."/>
            <person name="Moreira M.A.M."/>
            <person name="Nascimento F.F."/>
            <person name="Nicolas M.F."/>
            <person name="Oliveira J.G."/>
            <person name="Oliveira S.C."/>
            <person name="Paixao R.F.C."/>
            <person name="Parente J.A."/>
            <person name="Pedrosa F.O."/>
            <person name="Pena S.D.J."/>
            <person name="Pereira J.O."/>
            <person name="Pereira M."/>
            <person name="Pinto L.S.R.C."/>
            <person name="Pinto L.S."/>
            <person name="Porto J.I.R."/>
            <person name="Potrich D.P."/>
            <person name="Ramalho-Neto C.E."/>
            <person name="Reis A.M.M."/>
            <person name="Rigo L.U."/>
            <person name="Rondinelli E."/>
            <person name="Santos E.B.P."/>
            <person name="Santos F.R."/>
            <person name="Schneider M.P.C."/>
            <person name="Seuanez H.N."/>
            <person name="Silva A.M.R."/>
            <person name="da Silva A.L.C."/>
            <person name="Silva D.W."/>
            <person name="Silva R."/>
            <person name="Simoes I.C."/>
            <person name="Simon D."/>
            <person name="Soares C.M.A."/>
            <person name="Soares R.B.A."/>
            <person name="Souza E.M."/>
            <person name="Souza K.R.L."/>
            <person name="Souza R.C."/>
            <person name="Steffens M.B.R."/>
            <person name="Steindel M."/>
            <person name="Teixeira S.R."/>
            <person name="Urmenyi T."/>
            <person name="Vettore A."/>
            <person name="Wassem R."/>
            <person name="Zaha A."/>
            <person name="Simpson A.J.G."/>
        </authorList>
    </citation>
    <scope>NUCLEOTIDE SEQUENCE [LARGE SCALE GENOMIC DNA]</scope>
    <source>
        <strain>ATCC 12472 / DSM 30191 / JCM 1249 / CCUG 213 / NBRC 12614 / NCIMB 9131 / NCTC 9757 / MK</strain>
    </source>
</reference>
<accession>Q7NYM4</accession>
<dbReference type="EMBL" id="AE016825">
    <property type="protein sequence ID" value="AAQ58925.1"/>
    <property type="molecule type" value="Genomic_DNA"/>
</dbReference>
<dbReference type="RefSeq" id="WP_011134804.1">
    <property type="nucleotide sequence ID" value="NC_005085.1"/>
</dbReference>
<dbReference type="SMR" id="Q7NYM4"/>
<dbReference type="STRING" id="243365.CV_1250"/>
<dbReference type="KEGG" id="cvi:CV_1250"/>
<dbReference type="eggNOG" id="COG3022">
    <property type="taxonomic scope" value="Bacteria"/>
</dbReference>
<dbReference type="HOGENOM" id="CLU_061989_0_0_4"/>
<dbReference type="OrthoDB" id="9777133at2"/>
<dbReference type="Proteomes" id="UP000001424">
    <property type="component" value="Chromosome"/>
</dbReference>
<dbReference type="GO" id="GO:0005829">
    <property type="term" value="C:cytosol"/>
    <property type="evidence" value="ECO:0007669"/>
    <property type="project" value="TreeGrafter"/>
</dbReference>
<dbReference type="GO" id="GO:0033194">
    <property type="term" value="P:response to hydroperoxide"/>
    <property type="evidence" value="ECO:0007669"/>
    <property type="project" value="TreeGrafter"/>
</dbReference>
<dbReference type="HAMAP" id="MF_00652">
    <property type="entry name" value="UPF0246"/>
    <property type="match status" value="1"/>
</dbReference>
<dbReference type="InterPro" id="IPR005583">
    <property type="entry name" value="YaaA"/>
</dbReference>
<dbReference type="NCBIfam" id="NF002541">
    <property type="entry name" value="PRK02101.1-1"/>
    <property type="match status" value="1"/>
</dbReference>
<dbReference type="NCBIfam" id="NF002542">
    <property type="entry name" value="PRK02101.1-3"/>
    <property type="match status" value="1"/>
</dbReference>
<dbReference type="PANTHER" id="PTHR30283:SF4">
    <property type="entry name" value="PEROXIDE STRESS RESISTANCE PROTEIN YAAA"/>
    <property type="match status" value="1"/>
</dbReference>
<dbReference type="PANTHER" id="PTHR30283">
    <property type="entry name" value="PEROXIDE STRESS RESPONSE PROTEIN YAAA"/>
    <property type="match status" value="1"/>
</dbReference>
<dbReference type="Pfam" id="PF03883">
    <property type="entry name" value="H2O2_YaaD"/>
    <property type="match status" value="1"/>
</dbReference>
<keyword id="KW-1185">Reference proteome</keyword>
<proteinExistence type="inferred from homology"/>
<name>Y1250_CHRVO</name>